<reference key="1">
    <citation type="journal article" date="2005" name="Genome Res.">
        <title>Comparative and functional genomic analyses of the pathogenicity of phytopathogen Xanthomonas campestris pv. campestris.</title>
        <authorList>
            <person name="Qian W."/>
            <person name="Jia Y."/>
            <person name="Ren S.-X."/>
            <person name="He Y.-Q."/>
            <person name="Feng J.-X."/>
            <person name="Lu L.-F."/>
            <person name="Sun Q."/>
            <person name="Ying G."/>
            <person name="Tang D.-J."/>
            <person name="Tang H."/>
            <person name="Wu W."/>
            <person name="Hao P."/>
            <person name="Wang L."/>
            <person name="Jiang B.-L."/>
            <person name="Zeng S."/>
            <person name="Gu W.-Y."/>
            <person name="Lu G."/>
            <person name="Rong L."/>
            <person name="Tian Y."/>
            <person name="Yao Z."/>
            <person name="Fu G."/>
            <person name="Chen B."/>
            <person name="Fang R."/>
            <person name="Qiang B."/>
            <person name="Chen Z."/>
            <person name="Zhao G.-P."/>
            <person name="Tang J.-L."/>
            <person name="He C."/>
        </authorList>
    </citation>
    <scope>NUCLEOTIDE SEQUENCE [LARGE SCALE GENOMIC DNA]</scope>
    <source>
        <strain>8004</strain>
    </source>
</reference>
<dbReference type="EMBL" id="CP000050">
    <property type="protein sequence ID" value="AAY49565.1"/>
    <property type="molecule type" value="Genomic_DNA"/>
</dbReference>
<dbReference type="RefSeq" id="WP_011036893.1">
    <property type="nucleotide sequence ID" value="NZ_CP155948.1"/>
</dbReference>
<dbReference type="SMR" id="Q4UTQ8"/>
<dbReference type="GeneID" id="58013730"/>
<dbReference type="KEGG" id="xcb:XC_2515"/>
<dbReference type="HOGENOM" id="CLU_113688_2_0_6"/>
<dbReference type="PHI-base" id="PHI:8205"/>
<dbReference type="Proteomes" id="UP000000420">
    <property type="component" value="Chromosome"/>
</dbReference>
<dbReference type="GO" id="GO:0005829">
    <property type="term" value="C:cytosol"/>
    <property type="evidence" value="ECO:0007669"/>
    <property type="project" value="TreeGrafter"/>
</dbReference>
<dbReference type="GO" id="GO:0003723">
    <property type="term" value="F:RNA binding"/>
    <property type="evidence" value="ECO:0007669"/>
    <property type="project" value="UniProtKB-UniRule"/>
</dbReference>
<dbReference type="GO" id="GO:0006355">
    <property type="term" value="P:regulation of DNA-templated transcription"/>
    <property type="evidence" value="ECO:0007669"/>
    <property type="project" value="InterPro"/>
</dbReference>
<dbReference type="GO" id="GO:0043487">
    <property type="term" value="P:regulation of RNA stability"/>
    <property type="evidence" value="ECO:0007669"/>
    <property type="project" value="TreeGrafter"/>
</dbReference>
<dbReference type="GO" id="GO:0045974">
    <property type="term" value="P:regulation of translation, ncRNA-mediated"/>
    <property type="evidence" value="ECO:0007669"/>
    <property type="project" value="TreeGrafter"/>
</dbReference>
<dbReference type="CDD" id="cd01716">
    <property type="entry name" value="Hfq"/>
    <property type="match status" value="1"/>
</dbReference>
<dbReference type="FunFam" id="2.30.30.100:FF:000001">
    <property type="entry name" value="RNA-binding protein Hfq"/>
    <property type="match status" value="1"/>
</dbReference>
<dbReference type="Gene3D" id="2.30.30.100">
    <property type="match status" value="1"/>
</dbReference>
<dbReference type="HAMAP" id="MF_00436">
    <property type="entry name" value="Hfq"/>
    <property type="match status" value="1"/>
</dbReference>
<dbReference type="InterPro" id="IPR005001">
    <property type="entry name" value="Hfq"/>
</dbReference>
<dbReference type="InterPro" id="IPR010920">
    <property type="entry name" value="LSM_dom_sf"/>
</dbReference>
<dbReference type="InterPro" id="IPR047575">
    <property type="entry name" value="Sm"/>
</dbReference>
<dbReference type="NCBIfam" id="TIGR02383">
    <property type="entry name" value="Hfq"/>
    <property type="match status" value="1"/>
</dbReference>
<dbReference type="NCBIfam" id="NF001602">
    <property type="entry name" value="PRK00395.1"/>
    <property type="match status" value="1"/>
</dbReference>
<dbReference type="PANTHER" id="PTHR34772">
    <property type="entry name" value="RNA-BINDING PROTEIN HFQ"/>
    <property type="match status" value="1"/>
</dbReference>
<dbReference type="PANTHER" id="PTHR34772:SF1">
    <property type="entry name" value="RNA-BINDING PROTEIN HFQ"/>
    <property type="match status" value="1"/>
</dbReference>
<dbReference type="Pfam" id="PF17209">
    <property type="entry name" value="Hfq"/>
    <property type="match status" value="1"/>
</dbReference>
<dbReference type="SUPFAM" id="SSF50182">
    <property type="entry name" value="Sm-like ribonucleoproteins"/>
    <property type="match status" value="1"/>
</dbReference>
<dbReference type="PROSITE" id="PS52002">
    <property type="entry name" value="SM"/>
    <property type="match status" value="1"/>
</dbReference>
<keyword id="KW-0694">RNA-binding</keyword>
<keyword id="KW-0346">Stress response</keyword>
<accession>Q4UTQ8</accession>
<protein>
    <recommendedName>
        <fullName evidence="1">RNA-binding protein Hfq</fullName>
    </recommendedName>
</protein>
<organism>
    <name type="scientific">Xanthomonas campestris pv. campestris (strain 8004)</name>
    <dbReference type="NCBI Taxonomy" id="314565"/>
    <lineage>
        <taxon>Bacteria</taxon>
        <taxon>Pseudomonadati</taxon>
        <taxon>Pseudomonadota</taxon>
        <taxon>Gammaproteobacteria</taxon>
        <taxon>Lysobacterales</taxon>
        <taxon>Lysobacteraceae</taxon>
        <taxon>Xanthomonas</taxon>
    </lineage>
</organism>
<name>HFQ_XANC8</name>
<sequence length="92" mass="10203">MAKGQSLQDPFLNALRRERVPVSVYLVNGIKLQGTIESFDQFVVLLRNTVSQMVYKHAISTVVPARNVRVGPGGGYVQSNENNQAEDDDVEQ</sequence>
<comment type="function">
    <text evidence="1">RNA chaperone that binds small regulatory RNA (sRNAs) and mRNAs to facilitate mRNA translational regulation in response to envelope stress, environmental stress and changes in metabolite concentrations. Also binds with high specificity to tRNAs.</text>
</comment>
<comment type="subunit">
    <text evidence="1">Homohexamer.</text>
</comment>
<comment type="similarity">
    <text evidence="1">Belongs to the Hfq family.</text>
</comment>
<evidence type="ECO:0000255" key="1">
    <source>
        <dbReference type="HAMAP-Rule" id="MF_00436"/>
    </source>
</evidence>
<evidence type="ECO:0000255" key="2">
    <source>
        <dbReference type="PROSITE-ProRule" id="PRU01346"/>
    </source>
</evidence>
<evidence type="ECO:0000256" key="3">
    <source>
        <dbReference type="SAM" id="MobiDB-lite"/>
    </source>
</evidence>
<gene>
    <name evidence="1" type="primary">hfq</name>
    <name type="ordered locus">XC_2515</name>
</gene>
<feature type="chain" id="PRO_0000265201" description="RNA-binding protein Hfq">
    <location>
        <begin position="1"/>
        <end position="92"/>
    </location>
</feature>
<feature type="domain" description="Sm" evidence="2">
    <location>
        <begin position="9"/>
        <end position="68"/>
    </location>
</feature>
<feature type="region of interest" description="Disordered" evidence="3">
    <location>
        <begin position="72"/>
        <end position="92"/>
    </location>
</feature>
<proteinExistence type="inferred from homology"/>